<feature type="chain" id="PRO_1000062741" description="TDP-N-acetylfucosamine:lipid II N-acetylfucosaminyltransferase">
    <location>
        <begin position="1"/>
        <end position="359"/>
    </location>
</feature>
<gene>
    <name evidence="1" type="primary">wecF</name>
    <name evidence="1" type="synonym">rffT</name>
    <name type="ordered locus">EcHS_A4010</name>
</gene>
<comment type="function">
    <text evidence="1">Catalyzes the synthesis of Und-PP-GlcNAc-ManNAcA-Fuc4NAc (Lipid III), the third lipid-linked intermediate involved in ECA synthesis.</text>
</comment>
<comment type="catalytic activity">
    <reaction evidence="1">
        <text>beta-D-ManNAcA-(1-&gt;4)-alpha-D-GlcNAc-di-trans,octa-cis-undecaprenyl diphosphate + dTDP-4-acetamido-4,6-dideoxy-alpha-D-galactose = alpha-D-FucNAc4-(1-&gt;4)-beta-D-ManNAcA-(1-&gt;4)-D-GlcNAc-undecaprenyl diphosphate + dTDP + H(+)</text>
        <dbReference type="Rhea" id="RHEA:28759"/>
        <dbReference type="ChEBI" id="CHEBI:15378"/>
        <dbReference type="ChEBI" id="CHEBI:58369"/>
        <dbReference type="ChEBI" id="CHEBI:61495"/>
        <dbReference type="ChEBI" id="CHEBI:61496"/>
        <dbReference type="ChEBI" id="CHEBI:68493"/>
        <dbReference type="EC" id="2.4.1.325"/>
    </reaction>
</comment>
<comment type="pathway">
    <text evidence="1">Bacterial outer membrane biogenesis; enterobacterial common antigen biosynthesis.</text>
</comment>
<comment type="subcellular location">
    <subcellularLocation>
        <location evidence="1">Cell inner membrane</location>
        <topology evidence="1">Peripheral membrane protein</topology>
    </subcellularLocation>
</comment>
<comment type="similarity">
    <text evidence="1">Belongs to the glycosyltransferase 56 family.</text>
</comment>
<evidence type="ECO:0000255" key="1">
    <source>
        <dbReference type="HAMAP-Rule" id="MF_01002"/>
    </source>
</evidence>
<protein>
    <recommendedName>
        <fullName evidence="1">TDP-N-acetylfucosamine:lipid II N-acetylfucosaminyltransferase</fullName>
        <ecNumber evidence="1">2.4.1.325</ecNumber>
    </recommendedName>
    <alternativeName>
        <fullName evidence="1">4-alpha-L-fucosyltransferase</fullName>
    </alternativeName>
    <alternativeName>
        <fullName evidence="1">TDP-Fuc4NAc:lipid II Fuc4NAc transferase</fullName>
        <shortName evidence="1">Fuc4NAc transferase</shortName>
    </alternativeName>
</protein>
<organism>
    <name type="scientific">Escherichia coli O9:H4 (strain HS)</name>
    <dbReference type="NCBI Taxonomy" id="331112"/>
    <lineage>
        <taxon>Bacteria</taxon>
        <taxon>Pseudomonadati</taxon>
        <taxon>Pseudomonadota</taxon>
        <taxon>Gammaproteobacteria</taxon>
        <taxon>Enterobacterales</taxon>
        <taxon>Enterobacteriaceae</taxon>
        <taxon>Escherichia</taxon>
    </lineage>
</organism>
<keyword id="KW-0997">Cell inner membrane</keyword>
<keyword id="KW-1003">Cell membrane</keyword>
<keyword id="KW-0328">Glycosyltransferase</keyword>
<keyword id="KW-0472">Membrane</keyword>
<keyword id="KW-0808">Transferase</keyword>
<sequence>MTVLIHVLGSDIPHHNRTVLRFFNDALAATSEHAREFMVVGKDDGLSDSCPALSVQFFPGKKSLAEAVIAKAKANRQQRFFFHGQFNPTLWLALLSGGIKPSQFFWHIWGADLYELSSGLRYKLFYPLRRLAQKRVGCVFATRGDLSFFVKTHPKVRGELLYFPTRMDPSLNTMANDRQREGKMTILVGNSGDRSNEHVAALRAVHQQFGDTVKVVVPMGYPPNNEAYIEEVRQAGLELFSEENLQVLSEKLEFDAYLALLRQCDLGYFIFARQQGIGTLCLLIQAGIPCVLNRENPFWQDMTEQHLPVLFTTDDLNEDIVREAQRQLASVDKNTIAFFSPNYLQGWQRALAIAAGEVA</sequence>
<accession>A8A6P8</accession>
<dbReference type="EC" id="2.4.1.325" evidence="1"/>
<dbReference type="EMBL" id="CP000802">
    <property type="protein sequence ID" value="ABV08202.1"/>
    <property type="molecule type" value="Genomic_DNA"/>
</dbReference>
<dbReference type="RefSeq" id="WP_000217251.1">
    <property type="nucleotide sequence ID" value="NC_009800.1"/>
</dbReference>
<dbReference type="SMR" id="A8A6P8"/>
<dbReference type="CAZy" id="GT56">
    <property type="family name" value="Glycosyltransferase Family 56"/>
</dbReference>
<dbReference type="KEGG" id="ecx:EcHS_A4010"/>
<dbReference type="HOGENOM" id="CLU_066584_0_0_6"/>
<dbReference type="UniPathway" id="UPA00566"/>
<dbReference type="GO" id="GO:0005886">
    <property type="term" value="C:plasma membrane"/>
    <property type="evidence" value="ECO:0007669"/>
    <property type="project" value="UniProtKB-SubCell"/>
</dbReference>
<dbReference type="GO" id="GO:0102031">
    <property type="term" value="F:4-acetamido-4,6-dideoxy-D-galactose transferase activity"/>
    <property type="evidence" value="ECO:0007669"/>
    <property type="project" value="UniProtKB-EC"/>
</dbReference>
<dbReference type="GO" id="GO:0008417">
    <property type="term" value="F:fucosyltransferase activity"/>
    <property type="evidence" value="ECO:0007669"/>
    <property type="project" value="InterPro"/>
</dbReference>
<dbReference type="GO" id="GO:0009246">
    <property type="term" value="P:enterobacterial common antigen biosynthetic process"/>
    <property type="evidence" value="ECO:0007669"/>
    <property type="project" value="UniProtKB-UniRule"/>
</dbReference>
<dbReference type="GO" id="GO:0036065">
    <property type="term" value="P:fucosylation"/>
    <property type="evidence" value="ECO:0007669"/>
    <property type="project" value="InterPro"/>
</dbReference>
<dbReference type="HAMAP" id="MF_01002">
    <property type="entry name" value="WecF_RffT"/>
    <property type="match status" value="1"/>
</dbReference>
<dbReference type="InterPro" id="IPR009993">
    <property type="entry name" value="WecF"/>
</dbReference>
<dbReference type="NCBIfam" id="NF002752">
    <property type="entry name" value="PRK02797.1-1"/>
    <property type="match status" value="1"/>
</dbReference>
<dbReference type="NCBIfam" id="NF002753">
    <property type="entry name" value="PRK02797.1-2"/>
    <property type="match status" value="1"/>
</dbReference>
<dbReference type="NCBIfam" id="NF002754">
    <property type="entry name" value="PRK02797.1-3"/>
    <property type="match status" value="1"/>
</dbReference>
<dbReference type="Pfam" id="PF07429">
    <property type="entry name" value="Glyco_transf_56"/>
    <property type="match status" value="1"/>
</dbReference>
<proteinExistence type="inferred from homology"/>
<reference key="1">
    <citation type="journal article" date="2008" name="J. Bacteriol.">
        <title>The pangenome structure of Escherichia coli: comparative genomic analysis of E. coli commensal and pathogenic isolates.</title>
        <authorList>
            <person name="Rasko D.A."/>
            <person name="Rosovitz M.J."/>
            <person name="Myers G.S.A."/>
            <person name="Mongodin E.F."/>
            <person name="Fricke W.F."/>
            <person name="Gajer P."/>
            <person name="Crabtree J."/>
            <person name="Sebaihia M."/>
            <person name="Thomson N.R."/>
            <person name="Chaudhuri R."/>
            <person name="Henderson I.R."/>
            <person name="Sperandio V."/>
            <person name="Ravel J."/>
        </authorList>
    </citation>
    <scope>NUCLEOTIDE SEQUENCE [LARGE SCALE GENOMIC DNA]</scope>
    <source>
        <strain>HS</strain>
    </source>
</reference>
<name>WECF_ECOHS</name>